<proteinExistence type="inferred from homology"/>
<organism>
    <name type="scientific">Nitrosomonas eutropha (strain DSM 101675 / C91 / Nm57)</name>
    <dbReference type="NCBI Taxonomy" id="335283"/>
    <lineage>
        <taxon>Bacteria</taxon>
        <taxon>Pseudomonadati</taxon>
        <taxon>Pseudomonadota</taxon>
        <taxon>Betaproteobacteria</taxon>
        <taxon>Nitrosomonadales</taxon>
        <taxon>Nitrosomonadaceae</taxon>
        <taxon>Nitrosomonas</taxon>
    </lineage>
</organism>
<protein>
    <recommendedName>
        <fullName evidence="1">ATP phosphoribosyltransferase regulatory subunit</fullName>
    </recommendedName>
</protein>
<gene>
    <name evidence="1" type="primary">hisZ</name>
    <name type="ordered locus">Neut_0966</name>
</gene>
<sequence length="390" mass="44085">MRNWLLPEYIEDVLPRDAYRIEKIRRLVMDKLFVHGYQFVMPPLLEYVESLLAGSGSGMNLRMFKVVDQLSGRMMGLRADMTPQAARIDAHLLNTNGVTRLCYASSVVHTVPDEITRTREPFQVGAELYGHSGIESDLEIQRLLLECLSVSGIQSIHLDLGHIRVFRSLIYGSGIRPEFEMELYAALWAKDTSALRELVYTGLNDLDKTVREALLLLPELYGDETVLLRARKYLPNFPEIREALDQLEHVAKALEPYVDRIIFDLADLRGYHYHTGMVFAAYTQGSPVAIALGGRYDEIGKSFGRARPATGFSLDLKQLSRLTDINDYPRGILAPWKPQDDELAAMIKQLRIAGHIVVTELPGENSKEVARCDRNLVLRNGKWEICPVSG</sequence>
<reference key="1">
    <citation type="journal article" date="2007" name="Environ. Microbiol.">
        <title>Whole-genome analysis of the ammonia-oxidizing bacterium, Nitrosomonas eutropha C91: implications for niche adaptation.</title>
        <authorList>
            <person name="Stein L.Y."/>
            <person name="Arp D.J."/>
            <person name="Berube P.M."/>
            <person name="Chain P.S."/>
            <person name="Hauser L."/>
            <person name="Jetten M.S."/>
            <person name="Klotz M.G."/>
            <person name="Larimer F.W."/>
            <person name="Norton J.M."/>
            <person name="Op den Camp H.J.M."/>
            <person name="Shin M."/>
            <person name="Wei X."/>
        </authorList>
    </citation>
    <scope>NUCLEOTIDE SEQUENCE [LARGE SCALE GENOMIC DNA]</scope>
    <source>
        <strain>DSM 101675 / C91 / Nm57</strain>
    </source>
</reference>
<dbReference type="EMBL" id="CP000450">
    <property type="protein sequence ID" value="ABI59226.1"/>
    <property type="molecule type" value="Genomic_DNA"/>
</dbReference>
<dbReference type="RefSeq" id="WP_011634050.1">
    <property type="nucleotide sequence ID" value="NC_008344.1"/>
</dbReference>
<dbReference type="SMR" id="Q0AHF6"/>
<dbReference type="STRING" id="335283.Neut_0966"/>
<dbReference type="KEGG" id="net:Neut_0966"/>
<dbReference type="eggNOG" id="COG3705">
    <property type="taxonomic scope" value="Bacteria"/>
</dbReference>
<dbReference type="HOGENOM" id="CLU_025113_0_1_4"/>
<dbReference type="OrthoDB" id="9769617at2"/>
<dbReference type="UniPathway" id="UPA00031">
    <property type="reaction ID" value="UER00006"/>
</dbReference>
<dbReference type="Proteomes" id="UP000001966">
    <property type="component" value="Chromosome"/>
</dbReference>
<dbReference type="GO" id="GO:0005737">
    <property type="term" value="C:cytoplasm"/>
    <property type="evidence" value="ECO:0007669"/>
    <property type="project" value="UniProtKB-SubCell"/>
</dbReference>
<dbReference type="GO" id="GO:0004821">
    <property type="term" value="F:histidine-tRNA ligase activity"/>
    <property type="evidence" value="ECO:0007669"/>
    <property type="project" value="TreeGrafter"/>
</dbReference>
<dbReference type="GO" id="GO:0006427">
    <property type="term" value="P:histidyl-tRNA aminoacylation"/>
    <property type="evidence" value="ECO:0007669"/>
    <property type="project" value="TreeGrafter"/>
</dbReference>
<dbReference type="GO" id="GO:0000105">
    <property type="term" value="P:L-histidine biosynthetic process"/>
    <property type="evidence" value="ECO:0007669"/>
    <property type="project" value="UniProtKB-UniRule"/>
</dbReference>
<dbReference type="CDD" id="cd00773">
    <property type="entry name" value="HisRS-like_core"/>
    <property type="match status" value="1"/>
</dbReference>
<dbReference type="Gene3D" id="3.30.930.10">
    <property type="entry name" value="Bira Bifunctional Protein, Domain 2"/>
    <property type="match status" value="1"/>
</dbReference>
<dbReference type="HAMAP" id="MF_00125">
    <property type="entry name" value="HisZ"/>
    <property type="match status" value="1"/>
</dbReference>
<dbReference type="InterPro" id="IPR045864">
    <property type="entry name" value="aa-tRNA-synth_II/BPL/LPL"/>
</dbReference>
<dbReference type="InterPro" id="IPR041715">
    <property type="entry name" value="HisRS-like_core"/>
</dbReference>
<dbReference type="InterPro" id="IPR004516">
    <property type="entry name" value="HisRS/HisZ"/>
</dbReference>
<dbReference type="InterPro" id="IPR004517">
    <property type="entry name" value="HisZ"/>
</dbReference>
<dbReference type="NCBIfam" id="TIGR00443">
    <property type="entry name" value="hisZ_biosyn_reg"/>
    <property type="match status" value="1"/>
</dbReference>
<dbReference type="NCBIfam" id="NF008935">
    <property type="entry name" value="PRK12292.1-1"/>
    <property type="match status" value="1"/>
</dbReference>
<dbReference type="NCBIfam" id="NF009086">
    <property type="entry name" value="PRK12421.1"/>
    <property type="match status" value="1"/>
</dbReference>
<dbReference type="PANTHER" id="PTHR43707:SF1">
    <property type="entry name" value="HISTIDINE--TRNA LIGASE, MITOCHONDRIAL-RELATED"/>
    <property type="match status" value="1"/>
</dbReference>
<dbReference type="PANTHER" id="PTHR43707">
    <property type="entry name" value="HISTIDYL-TRNA SYNTHETASE"/>
    <property type="match status" value="1"/>
</dbReference>
<dbReference type="Pfam" id="PF13393">
    <property type="entry name" value="tRNA-synt_His"/>
    <property type="match status" value="1"/>
</dbReference>
<dbReference type="PIRSF" id="PIRSF001549">
    <property type="entry name" value="His-tRNA_synth"/>
    <property type="match status" value="1"/>
</dbReference>
<dbReference type="SUPFAM" id="SSF55681">
    <property type="entry name" value="Class II aaRS and biotin synthetases"/>
    <property type="match status" value="1"/>
</dbReference>
<comment type="function">
    <text evidence="1">Required for the first step of histidine biosynthesis. May allow the feedback regulation of ATP phosphoribosyltransferase activity by histidine.</text>
</comment>
<comment type="pathway">
    <text evidence="1">Amino-acid biosynthesis; L-histidine biosynthesis; L-histidine from 5-phospho-alpha-D-ribose 1-diphosphate: step 1/9.</text>
</comment>
<comment type="subunit">
    <text evidence="1">Heteromultimer composed of HisG and HisZ subunits.</text>
</comment>
<comment type="subcellular location">
    <subcellularLocation>
        <location evidence="1">Cytoplasm</location>
    </subcellularLocation>
</comment>
<comment type="miscellaneous">
    <text>This function is generally fulfilled by the C-terminal part of HisG, which is missing in some bacteria such as this one.</text>
</comment>
<comment type="similarity">
    <text evidence="1">Belongs to the class-II aminoacyl-tRNA synthetase family. HisZ subfamily.</text>
</comment>
<accession>Q0AHF6</accession>
<keyword id="KW-0028">Amino-acid biosynthesis</keyword>
<keyword id="KW-0963">Cytoplasm</keyword>
<keyword id="KW-0368">Histidine biosynthesis</keyword>
<name>HISZ_NITEC</name>
<evidence type="ECO:0000255" key="1">
    <source>
        <dbReference type="HAMAP-Rule" id="MF_00125"/>
    </source>
</evidence>
<feature type="chain" id="PRO_1000016272" description="ATP phosphoribosyltransferase regulatory subunit">
    <location>
        <begin position="1"/>
        <end position="390"/>
    </location>
</feature>